<evidence type="ECO:0000255" key="1">
    <source>
        <dbReference type="HAMAP-Rule" id="MF_01184"/>
    </source>
</evidence>
<comment type="function">
    <text evidence="1">Converts the preformed base xanthine, a product of nucleic acid breakdown, to xanthosine 5'-monophosphate (XMP), so it can be reused for RNA or DNA synthesis.</text>
</comment>
<comment type="catalytic activity">
    <reaction evidence="1">
        <text>XMP + diphosphate = xanthine + 5-phospho-alpha-D-ribose 1-diphosphate</text>
        <dbReference type="Rhea" id="RHEA:10800"/>
        <dbReference type="ChEBI" id="CHEBI:17712"/>
        <dbReference type="ChEBI" id="CHEBI:33019"/>
        <dbReference type="ChEBI" id="CHEBI:57464"/>
        <dbReference type="ChEBI" id="CHEBI:58017"/>
        <dbReference type="EC" id="2.4.2.22"/>
    </reaction>
</comment>
<comment type="pathway">
    <text evidence="1">Purine metabolism; XMP biosynthesis via salvage pathway; XMP from xanthine: step 1/1.</text>
</comment>
<comment type="subunit">
    <text evidence="1">Homodimer.</text>
</comment>
<comment type="subcellular location">
    <subcellularLocation>
        <location evidence="1">Cytoplasm</location>
    </subcellularLocation>
</comment>
<comment type="similarity">
    <text evidence="1">Belongs to the purine/pyrimidine phosphoribosyltransferase family. Xpt subfamily.</text>
</comment>
<reference key="1">
    <citation type="journal article" date="2006" name="Proc. Natl. Acad. Sci. U.S.A.">
        <title>Comparative genomics of the lactic acid bacteria.</title>
        <authorList>
            <person name="Makarova K.S."/>
            <person name="Slesarev A."/>
            <person name="Wolf Y.I."/>
            <person name="Sorokin A."/>
            <person name="Mirkin B."/>
            <person name="Koonin E.V."/>
            <person name="Pavlov A."/>
            <person name="Pavlova N."/>
            <person name="Karamychev V."/>
            <person name="Polouchine N."/>
            <person name="Shakhova V."/>
            <person name="Grigoriev I."/>
            <person name="Lou Y."/>
            <person name="Rohksar D."/>
            <person name="Lucas S."/>
            <person name="Huang K."/>
            <person name="Goodstein D.M."/>
            <person name="Hawkins T."/>
            <person name="Plengvidhya V."/>
            <person name="Welker D."/>
            <person name="Hughes J."/>
            <person name="Goh Y."/>
            <person name="Benson A."/>
            <person name="Baldwin K."/>
            <person name="Lee J.-H."/>
            <person name="Diaz-Muniz I."/>
            <person name="Dosti B."/>
            <person name="Smeianov V."/>
            <person name="Wechter W."/>
            <person name="Barabote R."/>
            <person name="Lorca G."/>
            <person name="Altermann E."/>
            <person name="Barrangou R."/>
            <person name="Ganesan B."/>
            <person name="Xie Y."/>
            <person name="Rawsthorne H."/>
            <person name="Tamir D."/>
            <person name="Parker C."/>
            <person name="Breidt F."/>
            <person name="Broadbent J.R."/>
            <person name="Hutkins R."/>
            <person name="O'Sullivan D."/>
            <person name="Steele J."/>
            <person name="Unlu G."/>
            <person name="Saier M.H. Jr."/>
            <person name="Klaenhammer T."/>
            <person name="Richardson P."/>
            <person name="Kozyavkin S."/>
            <person name="Weimer B.C."/>
            <person name="Mills D.A."/>
        </authorList>
    </citation>
    <scope>NUCLEOTIDE SEQUENCE [LARGE SCALE GENOMIC DNA]</scope>
    <source>
        <strain>ATCC 8293 / DSM 20343 / BCRC 11652 / CCM 1803 / JCM 6124 / NCDO 523 / NBRC 100496 / NCIMB 8023 / NCTC 12954 / NRRL B-1118 / 37Y</strain>
    </source>
</reference>
<feature type="chain" id="PRO_0000339716" description="Xanthine phosphoribosyltransferase">
    <location>
        <begin position="1"/>
        <end position="189"/>
    </location>
</feature>
<feature type="binding site" evidence="1">
    <location>
        <position position="20"/>
    </location>
    <ligand>
        <name>xanthine</name>
        <dbReference type="ChEBI" id="CHEBI:17712"/>
    </ligand>
</feature>
<feature type="binding site" evidence="1">
    <location>
        <position position="27"/>
    </location>
    <ligand>
        <name>xanthine</name>
        <dbReference type="ChEBI" id="CHEBI:17712"/>
    </ligand>
</feature>
<feature type="binding site" evidence="1">
    <location>
        <begin position="128"/>
        <end position="132"/>
    </location>
    <ligand>
        <name>5-phospho-alpha-D-ribose 1-diphosphate</name>
        <dbReference type="ChEBI" id="CHEBI:58017"/>
    </ligand>
</feature>
<feature type="binding site" evidence="1">
    <location>
        <position position="156"/>
    </location>
    <ligand>
        <name>xanthine</name>
        <dbReference type="ChEBI" id="CHEBI:17712"/>
    </ligand>
</feature>
<name>XPT_LEUMM</name>
<accession>Q03UJ4</accession>
<dbReference type="EC" id="2.4.2.22" evidence="1"/>
<dbReference type="EMBL" id="CP000414">
    <property type="protein sequence ID" value="ABJ63128.1"/>
    <property type="molecule type" value="Genomic_DNA"/>
</dbReference>
<dbReference type="RefSeq" id="WP_010293912.1">
    <property type="nucleotide sequence ID" value="NC_008531.1"/>
</dbReference>
<dbReference type="SMR" id="Q03UJ4"/>
<dbReference type="EnsemblBacteria" id="ABJ63128">
    <property type="protein sequence ID" value="ABJ63128"/>
    <property type="gene ID" value="LEUM_2059"/>
</dbReference>
<dbReference type="GeneID" id="29576513"/>
<dbReference type="KEGG" id="lme:LEUM_2059"/>
<dbReference type="eggNOG" id="COG0503">
    <property type="taxonomic scope" value="Bacteria"/>
</dbReference>
<dbReference type="HOGENOM" id="CLU_099015_0_0_9"/>
<dbReference type="UniPathway" id="UPA00602">
    <property type="reaction ID" value="UER00658"/>
</dbReference>
<dbReference type="Proteomes" id="UP000000362">
    <property type="component" value="Chromosome"/>
</dbReference>
<dbReference type="GO" id="GO:0005737">
    <property type="term" value="C:cytoplasm"/>
    <property type="evidence" value="ECO:0007669"/>
    <property type="project" value="UniProtKB-SubCell"/>
</dbReference>
<dbReference type="GO" id="GO:0000310">
    <property type="term" value="F:xanthine phosphoribosyltransferase activity"/>
    <property type="evidence" value="ECO:0007669"/>
    <property type="project" value="UniProtKB-UniRule"/>
</dbReference>
<dbReference type="GO" id="GO:0006166">
    <property type="term" value="P:purine ribonucleoside salvage"/>
    <property type="evidence" value="ECO:0007669"/>
    <property type="project" value="UniProtKB-KW"/>
</dbReference>
<dbReference type="GO" id="GO:0046110">
    <property type="term" value="P:xanthine metabolic process"/>
    <property type="evidence" value="ECO:0007669"/>
    <property type="project" value="InterPro"/>
</dbReference>
<dbReference type="GO" id="GO:0032265">
    <property type="term" value="P:XMP salvage"/>
    <property type="evidence" value="ECO:0007669"/>
    <property type="project" value="UniProtKB-UniRule"/>
</dbReference>
<dbReference type="CDD" id="cd06223">
    <property type="entry name" value="PRTases_typeI"/>
    <property type="match status" value="1"/>
</dbReference>
<dbReference type="Gene3D" id="3.40.50.2020">
    <property type="match status" value="1"/>
</dbReference>
<dbReference type="HAMAP" id="MF_01184">
    <property type="entry name" value="XPRTase"/>
    <property type="match status" value="1"/>
</dbReference>
<dbReference type="InterPro" id="IPR000836">
    <property type="entry name" value="PRibTrfase_dom"/>
</dbReference>
<dbReference type="InterPro" id="IPR029057">
    <property type="entry name" value="PRTase-like"/>
</dbReference>
<dbReference type="InterPro" id="IPR050118">
    <property type="entry name" value="Pur/Pyrimidine_PRTase"/>
</dbReference>
<dbReference type="InterPro" id="IPR010079">
    <property type="entry name" value="Xanthine_PRibTrfase"/>
</dbReference>
<dbReference type="NCBIfam" id="NF006671">
    <property type="entry name" value="PRK09219.1"/>
    <property type="match status" value="1"/>
</dbReference>
<dbReference type="NCBIfam" id="TIGR01744">
    <property type="entry name" value="XPRTase"/>
    <property type="match status" value="1"/>
</dbReference>
<dbReference type="PANTHER" id="PTHR43864">
    <property type="entry name" value="HYPOXANTHINE/GUANINE PHOSPHORIBOSYLTRANSFERASE"/>
    <property type="match status" value="1"/>
</dbReference>
<dbReference type="PANTHER" id="PTHR43864:SF1">
    <property type="entry name" value="XANTHINE PHOSPHORIBOSYLTRANSFERASE"/>
    <property type="match status" value="1"/>
</dbReference>
<dbReference type="Pfam" id="PF00156">
    <property type="entry name" value="Pribosyltran"/>
    <property type="match status" value="1"/>
</dbReference>
<dbReference type="SUPFAM" id="SSF53271">
    <property type="entry name" value="PRTase-like"/>
    <property type="match status" value="1"/>
</dbReference>
<gene>
    <name evidence="1" type="primary">xpt</name>
    <name type="ordered locus">LEUM_2059</name>
</gene>
<organism>
    <name type="scientific">Leuconostoc mesenteroides subsp. mesenteroides (strain ATCC 8293 / DSM 20343 / BCRC 11652 / CCM 1803 / JCM 6124 / NCDO 523 / NBRC 100496 / NCIMB 8023 / NCTC 12954 / NRRL B-1118 / 37Y)</name>
    <dbReference type="NCBI Taxonomy" id="203120"/>
    <lineage>
        <taxon>Bacteria</taxon>
        <taxon>Bacillati</taxon>
        <taxon>Bacillota</taxon>
        <taxon>Bacilli</taxon>
        <taxon>Lactobacillales</taxon>
        <taxon>Lactobacillaceae</taxon>
        <taxon>Leuconostoc</taxon>
    </lineage>
</organism>
<proteinExistence type="inferred from homology"/>
<keyword id="KW-0963">Cytoplasm</keyword>
<keyword id="KW-0328">Glycosyltransferase</keyword>
<keyword id="KW-0660">Purine salvage</keyword>
<keyword id="KW-1185">Reference proteome</keyword>
<keyword id="KW-0808">Transferase</keyword>
<sequence>MKILEQRIKKDGRVLGKDVLKVDSFLNHQVDPELMQAMGEEFATIFSDEKIDKIVTVESSGIAPAVFAGLALHVPVVFARKNKSLTLPENVWTADVYSFTKQTTNHIMIDHRFLSAAENILIIDDFLANGQAVEGLLKIANDANANVVGVGVVIEKTFQKGRQILDERGVRVESLARIKGFENDEVIFL</sequence>
<protein>
    <recommendedName>
        <fullName evidence="1">Xanthine phosphoribosyltransferase</fullName>
        <shortName evidence="1">XPRTase</shortName>
        <ecNumber evidence="1">2.4.2.22</ecNumber>
    </recommendedName>
</protein>